<accession>Q6VAF6</accession>
<protein>
    <recommendedName>
        <fullName>Tubulin beta-6 chain</fullName>
    </recommendedName>
    <alternativeName>
        <fullName>Beta-6-tubulin</fullName>
    </alternativeName>
</protein>
<reference key="1">
    <citation type="submission" date="2003-07" db="EMBL/GenBank/DDBJ databases">
        <title>Cloning and expression of nine tubulin genes from elongating cotton fiber cells.</title>
        <authorList>
            <person name="Feng J.-X."/>
            <person name="Wei G."/>
            <person name="Wang L."/>
            <person name="Ji S.-J."/>
            <person name="Zhang T.-Z."/>
            <person name="Zhu Y.-X."/>
        </authorList>
    </citation>
    <scope>NUCLEOTIDE SEQUENCE [MRNA]</scope>
</reference>
<evidence type="ECO:0000250" key="1">
    <source>
        <dbReference type="UniProtKB" id="P68363"/>
    </source>
</evidence>
<evidence type="ECO:0000250" key="2">
    <source>
        <dbReference type="UniProtKB" id="Q13509"/>
    </source>
</evidence>
<evidence type="ECO:0000256" key="3">
    <source>
        <dbReference type="SAM" id="MobiDB-lite"/>
    </source>
</evidence>
<evidence type="ECO:0000305" key="4"/>
<proteinExistence type="evidence at transcript level"/>
<keyword id="KW-0963">Cytoplasm</keyword>
<keyword id="KW-0206">Cytoskeleton</keyword>
<keyword id="KW-0342">GTP-binding</keyword>
<keyword id="KW-0460">Magnesium</keyword>
<keyword id="KW-0479">Metal-binding</keyword>
<keyword id="KW-0493">Microtubule</keyword>
<keyword id="KW-0547">Nucleotide-binding</keyword>
<keyword id="KW-1185">Reference proteome</keyword>
<name>TBB6_GOSHI</name>
<feature type="chain" id="PRO_0000048349" description="Tubulin beta-6 chain">
    <location>
        <begin position="1"/>
        <end position="450"/>
    </location>
</feature>
<feature type="region of interest" description="Disordered" evidence="3">
    <location>
        <begin position="429"/>
        <end position="450"/>
    </location>
</feature>
<feature type="compositionally biased region" description="Acidic residues" evidence="3">
    <location>
        <begin position="431"/>
        <end position="450"/>
    </location>
</feature>
<feature type="binding site" evidence="2">
    <location>
        <position position="11"/>
    </location>
    <ligand>
        <name>GTP</name>
        <dbReference type="ChEBI" id="CHEBI:37565"/>
    </ligand>
</feature>
<feature type="binding site" evidence="1">
    <location>
        <position position="71"/>
    </location>
    <ligand>
        <name>GTP</name>
        <dbReference type="ChEBI" id="CHEBI:37565"/>
    </ligand>
</feature>
<feature type="binding site" evidence="1">
    <location>
        <position position="71"/>
    </location>
    <ligand>
        <name>Mg(2+)</name>
        <dbReference type="ChEBI" id="CHEBI:18420"/>
    </ligand>
</feature>
<feature type="binding site" evidence="2">
    <location>
        <position position="140"/>
    </location>
    <ligand>
        <name>GTP</name>
        <dbReference type="ChEBI" id="CHEBI:37565"/>
    </ligand>
</feature>
<feature type="binding site" evidence="2">
    <location>
        <position position="144"/>
    </location>
    <ligand>
        <name>GTP</name>
        <dbReference type="ChEBI" id="CHEBI:37565"/>
    </ligand>
</feature>
<feature type="binding site" evidence="2">
    <location>
        <position position="145"/>
    </location>
    <ligand>
        <name>GTP</name>
        <dbReference type="ChEBI" id="CHEBI:37565"/>
    </ligand>
</feature>
<feature type="binding site" evidence="2">
    <location>
        <position position="146"/>
    </location>
    <ligand>
        <name>GTP</name>
        <dbReference type="ChEBI" id="CHEBI:37565"/>
    </ligand>
</feature>
<feature type="binding site" evidence="2">
    <location>
        <position position="206"/>
    </location>
    <ligand>
        <name>GTP</name>
        <dbReference type="ChEBI" id="CHEBI:37565"/>
    </ligand>
</feature>
<feature type="binding site" evidence="2">
    <location>
        <position position="228"/>
    </location>
    <ligand>
        <name>GTP</name>
        <dbReference type="ChEBI" id="CHEBI:37565"/>
    </ligand>
</feature>
<dbReference type="EMBL" id="AY345608">
    <property type="protein sequence ID" value="AAQ92666.1"/>
    <property type="molecule type" value="mRNA"/>
</dbReference>
<dbReference type="SMR" id="Q6VAF6"/>
<dbReference type="STRING" id="3635.Q6VAF6"/>
<dbReference type="PaxDb" id="3635-Q6VAF6"/>
<dbReference type="Proteomes" id="UP000189702">
    <property type="component" value="Unplaced"/>
</dbReference>
<dbReference type="GO" id="GO:0005737">
    <property type="term" value="C:cytoplasm"/>
    <property type="evidence" value="ECO:0000318"/>
    <property type="project" value="GO_Central"/>
</dbReference>
<dbReference type="GO" id="GO:0005874">
    <property type="term" value="C:microtubule"/>
    <property type="evidence" value="ECO:0000318"/>
    <property type="project" value="GO_Central"/>
</dbReference>
<dbReference type="GO" id="GO:0005525">
    <property type="term" value="F:GTP binding"/>
    <property type="evidence" value="ECO:0000318"/>
    <property type="project" value="GO_Central"/>
</dbReference>
<dbReference type="GO" id="GO:0003924">
    <property type="term" value="F:GTPase activity"/>
    <property type="evidence" value="ECO:0007669"/>
    <property type="project" value="InterPro"/>
</dbReference>
<dbReference type="GO" id="GO:0046872">
    <property type="term" value="F:metal ion binding"/>
    <property type="evidence" value="ECO:0007669"/>
    <property type="project" value="UniProtKB-KW"/>
</dbReference>
<dbReference type="GO" id="GO:0005200">
    <property type="term" value="F:structural constituent of cytoskeleton"/>
    <property type="evidence" value="ECO:0000318"/>
    <property type="project" value="GO_Central"/>
</dbReference>
<dbReference type="GO" id="GO:0000226">
    <property type="term" value="P:microtubule cytoskeleton organization"/>
    <property type="evidence" value="ECO:0000318"/>
    <property type="project" value="GO_Central"/>
</dbReference>
<dbReference type="GO" id="GO:0000278">
    <property type="term" value="P:mitotic cell cycle"/>
    <property type="evidence" value="ECO:0000318"/>
    <property type="project" value="GO_Central"/>
</dbReference>
<dbReference type="CDD" id="cd02187">
    <property type="entry name" value="beta_tubulin"/>
    <property type="match status" value="1"/>
</dbReference>
<dbReference type="FunFam" id="1.10.287.600:FF:000002">
    <property type="entry name" value="Tubulin beta chain"/>
    <property type="match status" value="1"/>
</dbReference>
<dbReference type="FunFam" id="3.30.1330.20:FF:000002">
    <property type="entry name" value="Tubulin beta chain"/>
    <property type="match status" value="1"/>
</dbReference>
<dbReference type="FunFam" id="3.40.50.1440:FF:000005">
    <property type="entry name" value="Tubulin beta chain"/>
    <property type="match status" value="1"/>
</dbReference>
<dbReference type="Gene3D" id="1.10.287.600">
    <property type="entry name" value="Helix hairpin bin"/>
    <property type="match status" value="1"/>
</dbReference>
<dbReference type="Gene3D" id="3.30.1330.20">
    <property type="entry name" value="Tubulin/FtsZ, C-terminal domain"/>
    <property type="match status" value="1"/>
</dbReference>
<dbReference type="Gene3D" id="3.40.50.1440">
    <property type="entry name" value="Tubulin/FtsZ, GTPase domain"/>
    <property type="match status" value="1"/>
</dbReference>
<dbReference type="InterPro" id="IPR013838">
    <property type="entry name" value="Beta-tubulin_BS"/>
</dbReference>
<dbReference type="InterPro" id="IPR002453">
    <property type="entry name" value="Beta_tubulin"/>
</dbReference>
<dbReference type="InterPro" id="IPR008280">
    <property type="entry name" value="Tub_FtsZ_C"/>
</dbReference>
<dbReference type="InterPro" id="IPR000217">
    <property type="entry name" value="Tubulin"/>
</dbReference>
<dbReference type="InterPro" id="IPR037103">
    <property type="entry name" value="Tubulin/FtsZ-like_C"/>
</dbReference>
<dbReference type="InterPro" id="IPR018316">
    <property type="entry name" value="Tubulin/FtsZ_2-layer-sand-dom"/>
</dbReference>
<dbReference type="InterPro" id="IPR036525">
    <property type="entry name" value="Tubulin/FtsZ_GTPase_sf"/>
</dbReference>
<dbReference type="InterPro" id="IPR023123">
    <property type="entry name" value="Tubulin_C"/>
</dbReference>
<dbReference type="InterPro" id="IPR017975">
    <property type="entry name" value="Tubulin_CS"/>
</dbReference>
<dbReference type="InterPro" id="IPR003008">
    <property type="entry name" value="Tubulin_FtsZ_GTPase"/>
</dbReference>
<dbReference type="PANTHER" id="PTHR11588">
    <property type="entry name" value="TUBULIN"/>
    <property type="match status" value="1"/>
</dbReference>
<dbReference type="Pfam" id="PF00091">
    <property type="entry name" value="Tubulin"/>
    <property type="match status" value="1"/>
</dbReference>
<dbReference type="Pfam" id="PF03953">
    <property type="entry name" value="Tubulin_C"/>
    <property type="match status" value="1"/>
</dbReference>
<dbReference type="PRINTS" id="PR01163">
    <property type="entry name" value="BETATUBULIN"/>
</dbReference>
<dbReference type="PRINTS" id="PR01161">
    <property type="entry name" value="TUBULIN"/>
</dbReference>
<dbReference type="SMART" id="SM00864">
    <property type="entry name" value="Tubulin"/>
    <property type="match status" value="1"/>
</dbReference>
<dbReference type="SMART" id="SM00865">
    <property type="entry name" value="Tubulin_C"/>
    <property type="match status" value="1"/>
</dbReference>
<dbReference type="SUPFAM" id="SSF55307">
    <property type="entry name" value="Tubulin C-terminal domain-like"/>
    <property type="match status" value="1"/>
</dbReference>
<dbReference type="SUPFAM" id="SSF52490">
    <property type="entry name" value="Tubulin nucleotide-binding domain-like"/>
    <property type="match status" value="1"/>
</dbReference>
<dbReference type="PROSITE" id="PS00227">
    <property type="entry name" value="TUBULIN"/>
    <property type="match status" value="1"/>
</dbReference>
<dbReference type="PROSITE" id="PS00228">
    <property type="entry name" value="TUBULIN_B_AUTOREG"/>
    <property type="match status" value="1"/>
</dbReference>
<comment type="function">
    <text>Tubulin is the major constituent of microtubules, a cylinder consisting of laterally associated linear protofilaments composed of alpha- and beta-tubulin heterodimers. Microtubules grow by the addition of GTP-tubulin dimers to the microtubule end, where a stabilizing cap forms. Below the cap, tubulin dimers are in GDP-bound state, owing to GTPase activity of alpha-tubulin.</text>
</comment>
<comment type="cofactor">
    <cofactor evidence="1">
        <name>Mg(2+)</name>
        <dbReference type="ChEBI" id="CHEBI:18420"/>
    </cofactor>
</comment>
<comment type="subunit">
    <text>Dimer of alpha and beta chains. A typical microtubule is a hollow water-filled tube with an outer diameter of 25 nm and an inner diameter of 15 nM. Alpha-beta heterodimers associate head-to-tail to form protofilaments running lengthwise along the microtubule wall with the beta-tubulin subunit facing the microtubule plus end conferring a structural polarity. Microtubules usually have 13 protofilaments but different protofilament numbers can be found in some organisms and specialized cells.</text>
</comment>
<comment type="subcellular location">
    <subcellularLocation>
        <location>Cytoplasm</location>
        <location>Cytoskeleton</location>
    </subcellularLocation>
</comment>
<comment type="similarity">
    <text evidence="4">Belongs to the tubulin family.</text>
</comment>
<sequence length="450" mass="50493">MREILHVQGGQCGNQIGSKFWEVICDEHGVDPTGKYNGDGSSDIQLERIDVYYNEASGGRYVPRAVLMDLEPGTMDSIRSGPIGQIFRPDNFVFGQSGAGNNWAKGHYTEGAELIDAVLDVVRKEAENCDCLQGFQVCHSLGGGTGSGMGTLLISKIREEYPDRMMMTFSVFPSPKVSDTVVEPYNATLSVHQLVENADECMVLDNEALYDICFRTLKLTTPSFGDLNHLISATMSGVTCCLRFPGQLNSDLRKLAVNLIPFPRLHFFMVGFAPLTSRGSQQYVSLTVPELTQQMWDAKNMMCAADPRHGRYLTASAMFRGKMSTKEVDEQMMNVQNKNSSYFVEWIPNNVKSSVCDIPPRGLKTSSTFIGNSTSIQEMFRRVSEQFTAMFRRKAFLHWYTGEGMDEMEFTEAESNMNDLVAEYQQYQDATVEDEEEYEGEEGLDENYET</sequence>
<organism>
    <name type="scientific">Gossypium hirsutum</name>
    <name type="common">Upland cotton</name>
    <name type="synonym">Gossypium mexicanum</name>
    <dbReference type="NCBI Taxonomy" id="3635"/>
    <lineage>
        <taxon>Eukaryota</taxon>
        <taxon>Viridiplantae</taxon>
        <taxon>Streptophyta</taxon>
        <taxon>Embryophyta</taxon>
        <taxon>Tracheophyta</taxon>
        <taxon>Spermatophyta</taxon>
        <taxon>Magnoliopsida</taxon>
        <taxon>eudicotyledons</taxon>
        <taxon>Gunneridae</taxon>
        <taxon>Pentapetalae</taxon>
        <taxon>rosids</taxon>
        <taxon>malvids</taxon>
        <taxon>Malvales</taxon>
        <taxon>Malvaceae</taxon>
        <taxon>Malvoideae</taxon>
        <taxon>Gossypium</taxon>
    </lineage>
</organism>